<protein>
    <recommendedName>
        <fullName evidence="2">Early nodulin-40-2</fullName>
    </recommendedName>
</protein>
<proteinExistence type="evidence at transcript level"/>
<feature type="peptide" id="PRO_0000457860" description="Early nodulin-40-2">
    <location>
        <begin position="1"/>
        <end position="11"/>
    </location>
</feature>
<comment type="function">
    <text evidence="1 3">Modulates the action of auxin, and may function as plant growth regulator that alters phytohormone responses (Probable). During symbiosis with Sinorhizobium meliloti SM2011, involved in nodule initiation and essential for bacteroid development during nodulation (PubMed:17452749).</text>
</comment>
<comment type="developmental stage">
    <text evidence="1">During Sinorhizobium meliloti SM2011-induced nodulation, first expressed in cells of the nodule primordium (PubMed:17452749). Later observed near the apex (e.g. in cells of the infection zone) of the nodule and in vascular bundles (PubMed:17452749).</text>
</comment>
<comment type="disruption phenotype">
    <text evidence="1">Reduced nodule number after inoculation with Sinorhizobium meliloti SM2011; remaining nodules are abnormally spherical and contain a few small rod-shaped bacteroids, their development is impaired (PubMed:17452749). Bacteroids development is arrested at stage II-III (PubMed:17452749).</text>
</comment>
<evidence type="ECO:0000269" key="1">
    <source>
    </source>
</evidence>
<evidence type="ECO:0000303" key="2">
    <source>
    </source>
</evidence>
<evidence type="ECO:0000305" key="3"/>
<name>NO40B_MEDTR</name>
<gene>
    <name evidence="2" type="primary">ENOD40-2</name>
</gene>
<accession>P0DO62</accession>
<sequence length="11" mass="1401">MNLCWQKSIYD</sequence>
<organism>
    <name type="scientific">Medicago truncatula</name>
    <name type="common">Barrel medic</name>
    <name type="synonym">Medicago tribuloides</name>
    <dbReference type="NCBI Taxonomy" id="3880"/>
    <lineage>
        <taxon>Eukaryota</taxon>
        <taxon>Viridiplantae</taxon>
        <taxon>Streptophyta</taxon>
        <taxon>Embryophyta</taxon>
        <taxon>Tracheophyta</taxon>
        <taxon>Spermatophyta</taxon>
        <taxon>Magnoliopsida</taxon>
        <taxon>eudicotyledons</taxon>
        <taxon>Gunneridae</taxon>
        <taxon>Pentapetalae</taxon>
        <taxon>rosids</taxon>
        <taxon>fabids</taxon>
        <taxon>Fabales</taxon>
        <taxon>Fabaceae</taxon>
        <taxon>Papilionoideae</taxon>
        <taxon>50 kb inversion clade</taxon>
        <taxon>NPAAA clade</taxon>
        <taxon>Hologalegina</taxon>
        <taxon>IRL clade</taxon>
        <taxon>Trifolieae</taxon>
        <taxon>Medicago</taxon>
    </lineage>
</organism>
<keyword id="KW-0536">Nodulation</keyword>
<keyword id="KW-1185">Reference proteome</keyword>
<dbReference type="EMBL" id="CM001224">
    <property type="status" value="NOT_ANNOTATED_CDS"/>
    <property type="molecule type" value="Genomic_DNA"/>
</dbReference>
<dbReference type="Proteomes" id="UP000002051">
    <property type="component" value="Chromosome 8"/>
</dbReference>
<dbReference type="GO" id="GO:0009877">
    <property type="term" value="P:nodulation"/>
    <property type="evidence" value="ECO:0000315"/>
    <property type="project" value="UniProtKB"/>
</dbReference>
<dbReference type="GO" id="GO:0001759">
    <property type="term" value="P:organ induction"/>
    <property type="evidence" value="ECO:0000315"/>
    <property type="project" value="UniProtKB"/>
</dbReference>
<dbReference type="GO" id="GO:0009609">
    <property type="term" value="P:response to symbiotic bacterium"/>
    <property type="evidence" value="ECO:0000315"/>
    <property type="project" value="UniProtKB"/>
</dbReference>
<dbReference type="InterPro" id="IPR013186">
    <property type="entry name" value="ENOD40"/>
</dbReference>
<dbReference type="Pfam" id="PF08247">
    <property type="entry name" value="ENOD40"/>
    <property type="match status" value="1"/>
</dbReference>
<reference key="1">
    <citation type="journal article" date="2007" name="J. Exp. Bot.">
        <title>Medicago truncatula ENOD40-1 and ENOD40-2 are both involved in nodule initiation and bacteroid development.</title>
        <authorList>
            <person name="Wan X."/>
            <person name="Hontelez J."/>
            <person name="Lillo A."/>
            <person name="Guarnerio C."/>
            <person name="van de Peut D."/>
            <person name="Fedorova E."/>
            <person name="Bisseling T."/>
            <person name="Franssen H."/>
        </authorList>
    </citation>
    <scope>NUCLEOTIDE SEQUENCE [MRNA]</scope>
    <scope>FUNCTION</scope>
    <scope>DISRUPTION PHENOTYPE</scope>
    <scope>DEVELOPMENTAL STAGE</scope>
</reference>
<reference key="2">
    <citation type="journal article" date="2011" name="Nature">
        <title>The Medicago genome provides insight into the evolution of rhizobial symbioses.</title>
        <authorList>
            <person name="Young N.D."/>
            <person name="Debelle F."/>
            <person name="Oldroyd G.E.D."/>
            <person name="Geurts R."/>
            <person name="Cannon S.B."/>
            <person name="Udvardi M.K."/>
            <person name="Benedito V.A."/>
            <person name="Mayer K.F.X."/>
            <person name="Gouzy J."/>
            <person name="Schoof H."/>
            <person name="Van de Peer Y."/>
            <person name="Proost S."/>
            <person name="Cook D.R."/>
            <person name="Meyers B.C."/>
            <person name="Spannagl M."/>
            <person name="Cheung F."/>
            <person name="De Mita S."/>
            <person name="Krishnakumar V."/>
            <person name="Gundlach H."/>
            <person name="Zhou S."/>
            <person name="Mudge J."/>
            <person name="Bharti A.K."/>
            <person name="Murray J.D."/>
            <person name="Naoumkina M.A."/>
            <person name="Rosen B."/>
            <person name="Silverstein K.A.T."/>
            <person name="Tang H."/>
            <person name="Rombauts S."/>
            <person name="Zhao P.X."/>
            <person name="Zhou P."/>
            <person name="Barbe V."/>
            <person name="Bardou P."/>
            <person name="Bechner M."/>
            <person name="Bellec A."/>
            <person name="Berger A."/>
            <person name="Berges H."/>
            <person name="Bidwell S."/>
            <person name="Bisseling T."/>
            <person name="Choisne N."/>
            <person name="Couloux A."/>
            <person name="Denny R."/>
            <person name="Deshpande S."/>
            <person name="Dai X."/>
            <person name="Doyle J.J."/>
            <person name="Dudez A.-M."/>
            <person name="Farmer A.D."/>
            <person name="Fouteau S."/>
            <person name="Franken C."/>
            <person name="Gibelin C."/>
            <person name="Gish J."/>
            <person name="Goldstein S."/>
            <person name="Gonzalez A.J."/>
            <person name="Green P.J."/>
            <person name="Hallab A."/>
            <person name="Hartog M."/>
            <person name="Hua A."/>
            <person name="Humphray S.J."/>
            <person name="Jeong D.-H."/>
            <person name="Jing Y."/>
            <person name="Jocker A."/>
            <person name="Kenton S.M."/>
            <person name="Kim D.-J."/>
            <person name="Klee K."/>
            <person name="Lai H."/>
            <person name="Lang C."/>
            <person name="Lin S."/>
            <person name="Macmil S.L."/>
            <person name="Magdelenat G."/>
            <person name="Matthews L."/>
            <person name="McCorrison J."/>
            <person name="Monaghan E.L."/>
            <person name="Mun J.-H."/>
            <person name="Najar F.Z."/>
            <person name="Nicholson C."/>
            <person name="Noirot C."/>
            <person name="O'Bleness M."/>
            <person name="Paule C.R."/>
            <person name="Poulain J."/>
            <person name="Prion F."/>
            <person name="Qin B."/>
            <person name="Qu C."/>
            <person name="Retzel E.F."/>
            <person name="Riddle C."/>
            <person name="Sallet E."/>
            <person name="Samain S."/>
            <person name="Samson N."/>
            <person name="Sanders I."/>
            <person name="Saurat O."/>
            <person name="Scarpelli C."/>
            <person name="Schiex T."/>
            <person name="Segurens B."/>
            <person name="Severin A.J."/>
            <person name="Sherrier D.J."/>
            <person name="Shi R."/>
            <person name="Sims S."/>
            <person name="Singer S.R."/>
            <person name="Sinharoy S."/>
            <person name="Sterck L."/>
            <person name="Viollet A."/>
            <person name="Wang B.-B."/>
            <person name="Wang K."/>
            <person name="Wang M."/>
            <person name="Wang X."/>
            <person name="Warfsmann J."/>
            <person name="Weissenbach J."/>
            <person name="White D.D."/>
            <person name="White J.D."/>
            <person name="Wiley G.B."/>
            <person name="Wincker P."/>
            <person name="Xing Y."/>
            <person name="Yang L."/>
            <person name="Yao Z."/>
            <person name="Ying F."/>
            <person name="Zhai J."/>
            <person name="Zhou L."/>
            <person name="Zuber A."/>
            <person name="Denarie J."/>
            <person name="Dixon R.A."/>
            <person name="May G.D."/>
            <person name="Schwartz D.C."/>
            <person name="Rogers J."/>
            <person name="Quetier F."/>
            <person name="Town C.D."/>
            <person name="Roe B.A."/>
        </authorList>
    </citation>
    <scope>NUCLEOTIDE SEQUENCE [LARGE SCALE GENOMIC DNA]</scope>
    <source>
        <strain>cv. Jemalong A17</strain>
    </source>
</reference>
<reference key="3">
    <citation type="journal article" date="2014" name="BMC Genomics">
        <title>An improved genome release (version Mt4.0) for the model legume Medicago truncatula.</title>
        <authorList>
            <person name="Tang H."/>
            <person name="Krishnakumar V."/>
            <person name="Bidwell S."/>
            <person name="Rosen B."/>
            <person name="Chan A."/>
            <person name="Zhou S."/>
            <person name="Gentzbittel L."/>
            <person name="Childs K.L."/>
            <person name="Yandell M."/>
            <person name="Gundlach H."/>
            <person name="Mayer K.F."/>
            <person name="Schwartz D.C."/>
            <person name="Town C.D."/>
        </authorList>
    </citation>
    <scope>GENOME REANNOTATION</scope>
    <source>
        <strain>cv. Jemalong A17</strain>
    </source>
</reference>
<reference key="4">
    <citation type="journal article" date="2015" name="Int. Rev. Cell Mol. Biol.">
        <title>Leguminous plants: inventors of root nodules to accommodate symbiotic bacteria.</title>
        <authorList>
            <person name="Suzaki T."/>
            <person name="Yoro E."/>
            <person name="Kawaguchi M."/>
        </authorList>
    </citation>
    <scope>REVIEW ON NODULATION</scope>
</reference>
<reference key="5">
    <citation type="journal article" date="2020" name="Plant Cell">
        <title>Celebrating 20 years of genetic discoveries in legume nodulation and symbiotic nitrogen fixation.</title>
        <authorList>
            <person name="Roy S."/>
            <person name="Liu W."/>
            <person name="Nandety R.S."/>
            <person name="Crook A."/>
            <person name="Mysore K.S."/>
            <person name="Pislariu C.I."/>
            <person name="Frugoli J."/>
            <person name="Dickstein R."/>
            <person name="Udvardi M.K."/>
        </authorList>
    </citation>
    <scope>REVIEW ON NODULATION</scope>
</reference>